<keyword id="KW-0067">ATP-binding</keyword>
<keyword id="KW-0496">Mitochondrion</keyword>
<keyword id="KW-0547">Nucleotide-binding</keyword>
<keyword id="KW-1185">Reference proteome</keyword>
<keyword id="KW-0809">Transit peptide</keyword>
<organism>
    <name type="scientific">Danio rerio</name>
    <name type="common">Zebrafish</name>
    <name type="synonym">Brachydanio rerio</name>
    <dbReference type="NCBI Taxonomy" id="7955"/>
    <lineage>
        <taxon>Eukaryota</taxon>
        <taxon>Metazoa</taxon>
        <taxon>Chordata</taxon>
        <taxon>Craniata</taxon>
        <taxon>Vertebrata</taxon>
        <taxon>Euteleostomi</taxon>
        <taxon>Actinopterygii</taxon>
        <taxon>Neopterygii</taxon>
        <taxon>Teleostei</taxon>
        <taxon>Ostariophysi</taxon>
        <taxon>Cypriniformes</taxon>
        <taxon>Danionidae</taxon>
        <taxon>Danioninae</taxon>
        <taxon>Danio</taxon>
    </lineage>
</organism>
<gene>
    <name type="primary">vwa8</name>
    <name type="ORF">si:dkey-18l1.1</name>
</gene>
<name>VWA8_DANRE</name>
<proteinExistence type="inferred from homology"/>
<dbReference type="EMBL" id="BX649198">
    <property type="protein sequence ID" value="CAQ14217.1"/>
    <property type="molecule type" value="Genomic_DNA"/>
</dbReference>
<dbReference type="EMBL" id="AL929161">
    <property type="protein sequence ID" value="CAQ14217.1"/>
    <property type="status" value="JOINED"/>
    <property type="molecule type" value="Genomic_DNA"/>
</dbReference>
<dbReference type="EMBL" id="AL929161">
    <property type="protein sequence ID" value="CAQ14674.1"/>
    <property type="molecule type" value="Genomic_DNA"/>
</dbReference>
<dbReference type="EMBL" id="BX649198">
    <property type="protein sequence ID" value="CAQ14674.1"/>
    <property type="status" value="JOINED"/>
    <property type="molecule type" value="Genomic_DNA"/>
</dbReference>
<dbReference type="RefSeq" id="NP_001121810.1">
    <property type="nucleotide sequence ID" value="NM_001128338.1"/>
</dbReference>
<dbReference type="FunCoup" id="B0R0T1">
    <property type="interactions" value="1770"/>
</dbReference>
<dbReference type="STRING" id="7955.ENSDARP00000120404"/>
<dbReference type="PaxDb" id="7955-ENSDARP00000102255"/>
<dbReference type="PeptideAtlas" id="B0R0T1"/>
<dbReference type="Ensembl" id="ENSDART00000146706">
    <property type="protein sequence ID" value="ENSDARP00000120404"/>
    <property type="gene ID" value="ENSDARG00000078593"/>
</dbReference>
<dbReference type="GeneID" id="561317"/>
<dbReference type="KEGG" id="dre:561317"/>
<dbReference type="AGR" id="ZFIN:ZDB-GENE-070912-407"/>
<dbReference type="CTD" id="23078"/>
<dbReference type="ZFIN" id="ZDB-GENE-070912-407">
    <property type="gene designation" value="vwa8"/>
</dbReference>
<dbReference type="eggNOG" id="KOG1808">
    <property type="taxonomic scope" value="Eukaryota"/>
</dbReference>
<dbReference type="HOGENOM" id="CLU_001400_0_0_1"/>
<dbReference type="InParanoid" id="B0R0T1"/>
<dbReference type="OMA" id="GTHIVHP"/>
<dbReference type="OrthoDB" id="5186at2759"/>
<dbReference type="PhylomeDB" id="B0R0T1"/>
<dbReference type="PRO" id="PR:B0R0T1"/>
<dbReference type="Proteomes" id="UP000000437">
    <property type="component" value="Alternate scaffold 9"/>
</dbReference>
<dbReference type="Proteomes" id="UP000000437">
    <property type="component" value="Chromosome 9"/>
</dbReference>
<dbReference type="Bgee" id="ENSDARG00000078593">
    <property type="expression patterns" value="Expressed in muscle tissue and 19 other cell types or tissues"/>
</dbReference>
<dbReference type="GO" id="GO:0005737">
    <property type="term" value="C:cytoplasm"/>
    <property type="evidence" value="ECO:0000318"/>
    <property type="project" value="GO_Central"/>
</dbReference>
<dbReference type="GO" id="GO:0005739">
    <property type="term" value="C:mitochondrion"/>
    <property type="evidence" value="ECO:0000250"/>
    <property type="project" value="UniProtKB"/>
</dbReference>
<dbReference type="GO" id="GO:0005524">
    <property type="term" value="F:ATP binding"/>
    <property type="evidence" value="ECO:0007669"/>
    <property type="project" value="UniProtKB-KW"/>
</dbReference>
<dbReference type="GO" id="GO:0016887">
    <property type="term" value="F:ATP hydrolysis activity"/>
    <property type="evidence" value="ECO:0000250"/>
    <property type="project" value="UniProtKB"/>
</dbReference>
<dbReference type="GO" id="GO:0030903">
    <property type="term" value="P:notochord development"/>
    <property type="evidence" value="ECO:0000315"/>
    <property type="project" value="ZFIN"/>
</dbReference>
<dbReference type="FunFam" id="3.40.50.300:FF:000587">
    <property type="entry name" value="von Willebrand factor A domain containing 8"/>
    <property type="match status" value="1"/>
</dbReference>
<dbReference type="FunFam" id="3.40.50.300:FF:000663">
    <property type="entry name" value="von Willebrand factor A domain containing 8"/>
    <property type="match status" value="1"/>
</dbReference>
<dbReference type="Gene3D" id="3.40.50.300">
    <property type="entry name" value="P-loop containing nucleotide triphosphate hydrolases"/>
    <property type="match status" value="3"/>
</dbReference>
<dbReference type="InterPro" id="IPR003593">
    <property type="entry name" value="AAA+_ATPase"/>
</dbReference>
<dbReference type="InterPro" id="IPR011704">
    <property type="entry name" value="ATPase_dyneun-rel_AAA"/>
</dbReference>
<dbReference type="InterPro" id="IPR027417">
    <property type="entry name" value="P-loop_NTPase"/>
</dbReference>
<dbReference type="InterPro" id="IPR039891">
    <property type="entry name" value="VWA8"/>
</dbReference>
<dbReference type="InterPro" id="IPR002035">
    <property type="entry name" value="VWF_A"/>
</dbReference>
<dbReference type="InterPro" id="IPR036465">
    <property type="entry name" value="vWFA_dom_sf"/>
</dbReference>
<dbReference type="PANTHER" id="PTHR21610">
    <property type="entry name" value="VON WILLEBRAND FACTOR A DOMAIN-CONTAINING PROTEIN 8"/>
    <property type="match status" value="1"/>
</dbReference>
<dbReference type="PANTHER" id="PTHR21610:SF9">
    <property type="entry name" value="VON WILLEBRAND FACTOR A DOMAIN-CONTAINING PROTEIN 8"/>
    <property type="match status" value="1"/>
</dbReference>
<dbReference type="Pfam" id="PF07728">
    <property type="entry name" value="AAA_5"/>
    <property type="match status" value="3"/>
</dbReference>
<dbReference type="SMART" id="SM00382">
    <property type="entry name" value="AAA"/>
    <property type="match status" value="2"/>
</dbReference>
<dbReference type="SMART" id="SM00327">
    <property type="entry name" value="VWA"/>
    <property type="match status" value="1"/>
</dbReference>
<dbReference type="SUPFAM" id="SSF52540">
    <property type="entry name" value="P-loop containing nucleoside triphosphate hydrolases"/>
    <property type="match status" value="3"/>
</dbReference>
<dbReference type="SUPFAM" id="SSF53300">
    <property type="entry name" value="vWA-like"/>
    <property type="match status" value="1"/>
</dbReference>
<dbReference type="PROSITE" id="PS50234">
    <property type="entry name" value="VWFA"/>
    <property type="match status" value="1"/>
</dbReference>
<protein>
    <recommendedName>
        <fullName>von Willebrand factor A domain-containing protein 8</fullName>
    </recommendedName>
</protein>
<feature type="transit peptide" description="Mitochondrion" evidence="3">
    <location>
        <begin position="1"/>
        <end position="18"/>
    </location>
</feature>
<feature type="chain" id="PRO_0000343893" description="von Willebrand factor A domain-containing protein 8" evidence="3">
    <location>
        <begin position="19"/>
        <end position="1896"/>
    </location>
</feature>
<feature type="domain" description="VWFA" evidence="4">
    <location>
        <begin position="1705"/>
        <end position="1887"/>
    </location>
</feature>
<feature type="region of interest" description="Disordered" evidence="5">
    <location>
        <begin position="1536"/>
        <end position="1564"/>
    </location>
</feature>
<feature type="binding site" evidence="3">
    <location>
        <begin position="439"/>
        <end position="446"/>
    </location>
    <ligand>
        <name>ATP</name>
        <dbReference type="ChEBI" id="CHEBI:30616"/>
    </ligand>
</feature>
<sequence>MHSRILFKGTAAAVAARRIRHILGPLMSKEGWNCSAHEVKLLNTSSGDTVKIGEISYVLKTPKNPELVPVNHMMEALPQMVTQHLRWIMQKDLLGQDVFLIGPPGPLRRSIAMQYLELTKREVEYVALSRDTTETDLKQRREIRSGTAFYIDQCAVRAATEGRILVLEGLEKAERNVLPVLNNLLENREMQLEDGRFLMSAHRYDKLLEEHTKEELDAWKIVRVSEDFRVIALGLPVPRYKGNPLDPPLRSRFQARDIYYLPFKDQLEHLYRIGANVSAERVSQLLSFATTLCSQESASLSLPDFPVDNLPSALTVLNLFPMLSVQQLVQRLYPYEAMLGKEGRTAVEGVLNRFELTDGSTKPSPTAVVNIEPVNGGQAEQAAVTLNITNQKITFQVPSGTRPIRPPNSSPTFINTPTHERLLAEMMQSHLVKDICLIGAKGCGKSVIAREFAEMLGYSIEPVMLYQDMTARDLLQQRYTLPNGDTAWRASPLVTAAQEGKLVLLDGIHRVNLGTLAVLSRLLHDRELDLYDGTRLLRFDRYQALKEELQLTDQQLQDRSIFPIHPSFRIIALAEPPVIGSTTQQWLNPEILTMFLFHTIKPLAKAEETAVLQGMIPNVPGEAVEQLQHLTHSLRKSNDPTALSLASSLSTRQLLRICRRLSQYPQESVAHAVHKACLSRFLPSLARSSLEKSLANCSIEDHPDPASEQKQLYTCTVKDGLLTIGNVSAPVYSPDEKMKVPDVLFYENVQHMMVMQDMLKDFLLGEHLLLVGNQGVGKNKIVDRFLHLMNRPREYLQLHRDTTVQTLTLQPSVRDGIIIYEDSPLVKAVKMGHILVIDEADKAPTNVTCILKALVESGEMILADGRRIVSDALEAAGRPNAIPMHPDFRMIVLANRPGFPFLGNDFFGALGDIFSCHAVDNPKPQAEFAMLKQYGPDVPDAVLQKLVAAFGELRAMADQGTITYPYSTREVVNIVKHLQKFPDEGLANVVRNVFDFDSYNKDMREVLISALHKHGIPIGAKPTSVHLAKELPLPDCKMTGYWTISQGGNTRRKLLCPTETHRIDIKGPVFLRVQSYPSKRHESRSLSFTEEQAHWQIPMNEVNIVCDVTTAKDSIYVATCNPVSLYAMKEKGDSVQCIELYDIFPRTISGVWQPFVSVAALGNPLQDQVVLHEEQGNTVLHLDLVTGAVRRLILSQDKQDEAPRKTSNWWNSKESQPGYKMCKEFAHKNWLLFYKENGNQLDVVDVLEGQVHTIHLPINLKAVFLVAEDRWLLVESKTDRKFLLTKPMHMGAEETGVCQLHAISEDAVSSGFGNNSGMEAVSPQEVSSDQLSNENLSAALGQKIVSPNRILCDTNTYANVIVGFPDLMSPNELYSFRRSLPITESRRPDMFFGSSKRTGPAKRVNCVCLLDANQVVRALPPTQVPLAEVYPKDVTPPMSAAYLEVTDLNSKRLKYIPVPRSNSMSPYTVWISKVSDTDVVMAPLGSGGVVTVDMGGYVRLWETGLDHLQRSLLEWRNMIGSEDGRPVQITIERDSGLDVSSPKHGKIDAKNAPHVGGNQWAGGTGGRDTAGLGGKGGPYRLDAGHKVYQISQAEKDAVPDEVKRAARDMAEQAFKQRLKEIEMSEYDASTYDRFSGAVRRQVQSLRIILDSLQAKGKERQWLRNQALGELDDAKIIDGLTGEKSIYKRRGELEPELGSPQQKPKRLRVLADVSGSMYRFNGVDGRLERSMEAVCMVMEALESYEHKFKYDITGHSGDGFDIELVRCDKVPKNNKERLKVLKTMHAHSQFCMSGDYTLEGTEHAIRELAHEEADEHFVIVLSDANLERYGISPDRFARVLTSNPQVNAFAIFIGSLGDQADRLQKTLPAGRSFVAMDTKEIPQILQQIFTSTMLSSA</sequence>
<accession>B0R0T1</accession>
<evidence type="ECO:0000250" key="1">
    <source>
        <dbReference type="UniProtKB" id="A3KMH1"/>
    </source>
</evidence>
<evidence type="ECO:0000250" key="2">
    <source>
        <dbReference type="UniProtKB" id="Q8CC88"/>
    </source>
</evidence>
<evidence type="ECO:0000255" key="3"/>
<evidence type="ECO:0000255" key="4">
    <source>
        <dbReference type="PROSITE-ProRule" id="PRU00219"/>
    </source>
</evidence>
<evidence type="ECO:0000256" key="5">
    <source>
        <dbReference type="SAM" id="MobiDB-lite"/>
    </source>
</evidence>
<evidence type="ECO:0000269" key="6">
    <source>
    </source>
</evidence>
<reference key="1">
    <citation type="journal article" date="2013" name="Nature">
        <title>The zebrafish reference genome sequence and its relationship to the human genome.</title>
        <authorList>
            <person name="Howe K."/>
            <person name="Clark M.D."/>
            <person name="Torroja C.F."/>
            <person name="Torrance J."/>
            <person name="Berthelot C."/>
            <person name="Muffato M."/>
            <person name="Collins J.E."/>
            <person name="Humphray S."/>
            <person name="McLaren K."/>
            <person name="Matthews L."/>
            <person name="McLaren S."/>
            <person name="Sealy I."/>
            <person name="Caccamo M."/>
            <person name="Churcher C."/>
            <person name="Scott C."/>
            <person name="Barrett J.C."/>
            <person name="Koch R."/>
            <person name="Rauch G.J."/>
            <person name="White S."/>
            <person name="Chow W."/>
            <person name="Kilian B."/>
            <person name="Quintais L.T."/>
            <person name="Guerra-Assuncao J.A."/>
            <person name="Zhou Y."/>
            <person name="Gu Y."/>
            <person name="Yen J."/>
            <person name="Vogel J.H."/>
            <person name="Eyre T."/>
            <person name="Redmond S."/>
            <person name="Banerjee R."/>
            <person name="Chi J."/>
            <person name="Fu B."/>
            <person name="Langley E."/>
            <person name="Maguire S.F."/>
            <person name="Laird G.K."/>
            <person name="Lloyd D."/>
            <person name="Kenyon E."/>
            <person name="Donaldson S."/>
            <person name="Sehra H."/>
            <person name="Almeida-King J."/>
            <person name="Loveland J."/>
            <person name="Trevanion S."/>
            <person name="Jones M."/>
            <person name="Quail M."/>
            <person name="Willey D."/>
            <person name="Hunt A."/>
            <person name="Burton J."/>
            <person name="Sims S."/>
            <person name="McLay K."/>
            <person name="Plumb B."/>
            <person name="Davis J."/>
            <person name="Clee C."/>
            <person name="Oliver K."/>
            <person name="Clark R."/>
            <person name="Riddle C."/>
            <person name="Elliot D."/>
            <person name="Threadgold G."/>
            <person name="Harden G."/>
            <person name="Ware D."/>
            <person name="Begum S."/>
            <person name="Mortimore B."/>
            <person name="Kerry G."/>
            <person name="Heath P."/>
            <person name="Phillimore B."/>
            <person name="Tracey A."/>
            <person name="Corby N."/>
            <person name="Dunn M."/>
            <person name="Johnson C."/>
            <person name="Wood J."/>
            <person name="Clark S."/>
            <person name="Pelan S."/>
            <person name="Griffiths G."/>
            <person name="Smith M."/>
            <person name="Glithero R."/>
            <person name="Howden P."/>
            <person name="Barker N."/>
            <person name="Lloyd C."/>
            <person name="Stevens C."/>
            <person name="Harley J."/>
            <person name="Holt K."/>
            <person name="Panagiotidis G."/>
            <person name="Lovell J."/>
            <person name="Beasley H."/>
            <person name="Henderson C."/>
            <person name="Gordon D."/>
            <person name="Auger K."/>
            <person name="Wright D."/>
            <person name="Collins J."/>
            <person name="Raisen C."/>
            <person name="Dyer L."/>
            <person name="Leung K."/>
            <person name="Robertson L."/>
            <person name="Ambridge K."/>
            <person name="Leongamornlert D."/>
            <person name="McGuire S."/>
            <person name="Gilderthorp R."/>
            <person name="Griffiths C."/>
            <person name="Manthravadi D."/>
            <person name="Nichol S."/>
            <person name="Barker G."/>
            <person name="Whitehead S."/>
            <person name="Kay M."/>
            <person name="Brown J."/>
            <person name="Murnane C."/>
            <person name="Gray E."/>
            <person name="Humphries M."/>
            <person name="Sycamore N."/>
            <person name="Barker D."/>
            <person name="Saunders D."/>
            <person name="Wallis J."/>
            <person name="Babbage A."/>
            <person name="Hammond S."/>
            <person name="Mashreghi-Mohammadi M."/>
            <person name="Barr L."/>
            <person name="Martin S."/>
            <person name="Wray P."/>
            <person name="Ellington A."/>
            <person name="Matthews N."/>
            <person name="Ellwood M."/>
            <person name="Woodmansey R."/>
            <person name="Clark G."/>
            <person name="Cooper J."/>
            <person name="Tromans A."/>
            <person name="Grafham D."/>
            <person name="Skuce C."/>
            <person name="Pandian R."/>
            <person name="Andrews R."/>
            <person name="Harrison E."/>
            <person name="Kimberley A."/>
            <person name="Garnett J."/>
            <person name="Fosker N."/>
            <person name="Hall R."/>
            <person name="Garner P."/>
            <person name="Kelly D."/>
            <person name="Bird C."/>
            <person name="Palmer S."/>
            <person name="Gehring I."/>
            <person name="Berger A."/>
            <person name="Dooley C.M."/>
            <person name="Ersan-Urun Z."/>
            <person name="Eser C."/>
            <person name="Geiger H."/>
            <person name="Geisler M."/>
            <person name="Karotki L."/>
            <person name="Kirn A."/>
            <person name="Konantz J."/>
            <person name="Konantz M."/>
            <person name="Oberlander M."/>
            <person name="Rudolph-Geiger S."/>
            <person name="Teucke M."/>
            <person name="Lanz C."/>
            <person name="Raddatz G."/>
            <person name="Osoegawa K."/>
            <person name="Zhu B."/>
            <person name="Rapp A."/>
            <person name="Widaa S."/>
            <person name="Langford C."/>
            <person name="Yang F."/>
            <person name="Schuster S.C."/>
            <person name="Carter N.P."/>
            <person name="Harrow J."/>
            <person name="Ning Z."/>
            <person name="Herrero J."/>
            <person name="Searle S.M."/>
            <person name="Enright A."/>
            <person name="Geisler R."/>
            <person name="Plasterk R.H."/>
            <person name="Lee C."/>
            <person name="Westerfield M."/>
            <person name="de Jong P.J."/>
            <person name="Zon L.I."/>
            <person name="Postlethwait J.H."/>
            <person name="Nusslein-Volhard C."/>
            <person name="Hubbard T.J."/>
            <person name="Roest Crollius H."/>
            <person name="Rogers J."/>
            <person name="Stemple D.L."/>
        </authorList>
    </citation>
    <scope>NUCLEOTIDE SEQUENCE [LARGE SCALE GENOMIC DNA]</scope>
    <source>
        <strain>Tuebingen</strain>
    </source>
</reference>
<reference key="2">
    <citation type="journal article" date="2023" name="J. Med. Genet.">
        <title>Mutations in VWA8 cause autosomal-dominant retinitis pigmentosa via aberrant mitophagy activation.</title>
        <authorList>
            <person name="Kong L."/>
            <person name="Chu G."/>
            <person name="Ma W."/>
            <person name="Liang J."/>
            <person name="Liu D."/>
            <person name="Liu Q."/>
            <person name="Wei X."/>
            <person name="Jia S."/>
            <person name="Gu H."/>
            <person name="He Y."/>
            <person name="Luo W."/>
            <person name="Cao S."/>
            <person name="Zhou X."/>
            <person name="He R."/>
            <person name="Yuan Z."/>
        </authorList>
    </citation>
    <scope>DISRUPTION PHENOTYPE</scope>
</reference>
<comment type="function">
    <text evidence="2">Exhibits ATPase activity in vitro.</text>
</comment>
<comment type="subunit">
    <text evidence="1">Monomer.</text>
</comment>
<comment type="subcellular location">
    <subcellularLocation>
        <location evidence="2">Mitochondrion</location>
    </subcellularLocation>
</comment>
<comment type="disruption phenotype">
    <text evidence="6">Morpholino knockdown of vwa8 results in retinal pigment deposition, damage to photoreceptor cells, and significant narrowing of the retinal photoreceptor layer at 5 days post-fertilization (dpf). Mortality and morbidity are higher in the morphants compared to control embryos.</text>
</comment>